<proteinExistence type="inferred from homology"/>
<keyword id="KW-1185">Reference proteome</keyword>
<keyword id="KW-0687">Ribonucleoprotein</keyword>
<keyword id="KW-0689">Ribosomal protein</keyword>
<comment type="similarity">
    <text evidence="1">Belongs to the bacterial ribosomal protein bL28 family.</text>
</comment>
<accession>C1F7R8</accession>
<sequence>MAQVCEICGKGPQFGNNISHAHNVTRRRWNVNLRPVKVKVGPTANKRVRVCTSCIKSGKITKA</sequence>
<evidence type="ECO:0000255" key="1">
    <source>
        <dbReference type="HAMAP-Rule" id="MF_00373"/>
    </source>
</evidence>
<evidence type="ECO:0000305" key="2"/>
<organism>
    <name type="scientific">Acidobacterium capsulatum (strain ATCC 51196 / DSM 11244 / BCRC 80197 / JCM 7670 / NBRC 15755 / NCIMB 13165 / 161)</name>
    <dbReference type="NCBI Taxonomy" id="240015"/>
    <lineage>
        <taxon>Bacteria</taxon>
        <taxon>Pseudomonadati</taxon>
        <taxon>Acidobacteriota</taxon>
        <taxon>Terriglobia</taxon>
        <taxon>Terriglobales</taxon>
        <taxon>Acidobacteriaceae</taxon>
        <taxon>Acidobacterium</taxon>
    </lineage>
</organism>
<feature type="chain" id="PRO_1000195894" description="Large ribosomal subunit protein bL28">
    <location>
        <begin position="1"/>
        <end position="63"/>
    </location>
</feature>
<protein>
    <recommendedName>
        <fullName evidence="1">Large ribosomal subunit protein bL28</fullName>
    </recommendedName>
    <alternativeName>
        <fullName evidence="2">50S ribosomal protein L28</fullName>
    </alternativeName>
</protein>
<reference key="1">
    <citation type="journal article" date="2009" name="Appl. Environ. Microbiol.">
        <title>Three genomes from the phylum Acidobacteria provide insight into the lifestyles of these microorganisms in soils.</title>
        <authorList>
            <person name="Ward N.L."/>
            <person name="Challacombe J.F."/>
            <person name="Janssen P.H."/>
            <person name="Henrissat B."/>
            <person name="Coutinho P.M."/>
            <person name="Wu M."/>
            <person name="Xie G."/>
            <person name="Haft D.H."/>
            <person name="Sait M."/>
            <person name="Badger J."/>
            <person name="Barabote R.D."/>
            <person name="Bradley B."/>
            <person name="Brettin T.S."/>
            <person name="Brinkac L.M."/>
            <person name="Bruce D."/>
            <person name="Creasy T."/>
            <person name="Daugherty S.C."/>
            <person name="Davidsen T.M."/>
            <person name="DeBoy R.T."/>
            <person name="Detter J.C."/>
            <person name="Dodson R.J."/>
            <person name="Durkin A.S."/>
            <person name="Ganapathy A."/>
            <person name="Gwinn-Giglio M."/>
            <person name="Han C.S."/>
            <person name="Khouri H."/>
            <person name="Kiss H."/>
            <person name="Kothari S.P."/>
            <person name="Madupu R."/>
            <person name="Nelson K.E."/>
            <person name="Nelson W.C."/>
            <person name="Paulsen I."/>
            <person name="Penn K."/>
            <person name="Ren Q."/>
            <person name="Rosovitz M.J."/>
            <person name="Selengut J.D."/>
            <person name="Shrivastava S."/>
            <person name="Sullivan S.A."/>
            <person name="Tapia R."/>
            <person name="Thompson L.S."/>
            <person name="Watkins K.L."/>
            <person name="Yang Q."/>
            <person name="Yu C."/>
            <person name="Zafar N."/>
            <person name="Zhou L."/>
            <person name="Kuske C.R."/>
        </authorList>
    </citation>
    <scope>NUCLEOTIDE SEQUENCE [LARGE SCALE GENOMIC DNA]</scope>
    <source>
        <strain>ATCC 51196 / DSM 11244 / BCRC 80197 / JCM 7670 / NBRC 15755 / NCIMB 13165 / 161</strain>
    </source>
</reference>
<dbReference type="EMBL" id="CP001472">
    <property type="protein sequence ID" value="ACO32295.1"/>
    <property type="molecule type" value="Genomic_DNA"/>
</dbReference>
<dbReference type="RefSeq" id="WP_015896920.1">
    <property type="nucleotide sequence ID" value="NC_012483.1"/>
</dbReference>
<dbReference type="SMR" id="C1F7R8"/>
<dbReference type="STRING" id="240015.ACP_1801"/>
<dbReference type="KEGG" id="aca:ACP_1801"/>
<dbReference type="eggNOG" id="COG0227">
    <property type="taxonomic scope" value="Bacteria"/>
</dbReference>
<dbReference type="HOGENOM" id="CLU_064548_7_0_0"/>
<dbReference type="InParanoid" id="C1F7R8"/>
<dbReference type="OrthoDB" id="9805609at2"/>
<dbReference type="Proteomes" id="UP000002207">
    <property type="component" value="Chromosome"/>
</dbReference>
<dbReference type="GO" id="GO:1990904">
    <property type="term" value="C:ribonucleoprotein complex"/>
    <property type="evidence" value="ECO:0007669"/>
    <property type="project" value="UniProtKB-KW"/>
</dbReference>
<dbReference type="GO" id="GO:0005840">
    <property type="term" value="C:ribosome"/>
    <property type="evidence" value="ECO:0007669"/>
    <property type="project" value="UniProtKB-KW"/>
</dbReference>
<dbReference type="GO" id="GO:0003735">
    <property type="term" value="F:structural constituent of ribosome"/>
    <property type="evidence" value="ECO:0007669"/>
    <property type="project" value="InterPro"/>
</dbReference>
<dbReference type="GO" id="GO:0006412">
    <property type="term" value="P:translation"/>
    <property type="evidence" value="ECO:0007669"/>
    <property type="project" value="UniProtKB-UniRule"/>
</dbReference>
<dbReference type="Gene3D" id="2.30.170.40">
    <property type="entry name" value="Ribosomal protein L28/L24"/>
    <property type="match status" value="1"/>
</dbReference>
<dbReference type="HAMAP" id="MF_00373">
    <property type="entry name" value="Ribosomal_bL28"/>
    <property type="match status" value="1"/>
</dbReference>
<dbReference type="InterPro" id="IPR050096">
    <property type="entry name" value="Bacterial_rp_bL28"/>
</dbReference>
<dbReference type="InterPro" id="IPR026569">
    <property type="entry name" value="Ribosomal_bL28"/>
</dbReference>
<dbReference type="InterPro" id="IPR034704">
    <property type="entry name" value="Ribosomal_bL28/bL31-like_sf"/>
</dbReference>
<dbReference type="InterPro" id="IPR001383">
    <property type="entry name" value="Ribosomal_bL28_bact-type"/>
</dbReference>
<dbReference type="InterPro" id="IPR037147">
    <property type="entry name" value="Ribosomal_bL28_sf"/>
</dbReference>
<dbReference type="NCBIfam" id="TIGR00009">
    <property type="entry name" value="L28"/>
    <property type="match status" value="1"/>
</dbReference>
<dbReference type="PANTHER" id="PTHR39080">
    <property type="entry name" value="50S RIBOSOMAL PROTEIN L28"/>
    <property type="match status" value="1"/>
</dbReference>
<dbReference type="PANTHER" id="PTHR39080:SF1">
    <property type="entry name" value="LARGE RIBOSOMAL SUBUNIT PROTEIN BL28A"/>
    <property type="match status" value="1"/>
</dbReference>
<dbReference type="Pfam" id="PF00830">
    <property type="entry name" value="Ribosomal_L28"/>
    <property type="match status" value="1"/>
</dbReference>
<dbReference type="SUPFAM" id="SSF143800">
    <property type="entry name" value="L28p-like"/>
    <property type="match status" value="1"/>
</dbReference>
<gene>
    <name evidence="1" type="primary">rpmB</name>
    <name type="ordered locus">ACP_1801</name>
</gene>
<name>RL28_ACIC5</name>